<organism>
    <name type="scientific">Corynebacterium jeikeium (strain K411)</name>
    <dbReference type="NCBI Taxonomy" id="306537"/>
    <lineage>
        <taxon>Bacteria</taxon>
        <taxon>Bacillati</taxon>
        <taxon>Actinomycetota</taxon>
        <taxon>Actinomycetes</taxon>
        <taxon>Mycobacteriales</taxon>
        <taxon>Corynebacteriaceae</taxon>
        <taxon>Corynebacterium</taxon>
    </lineage>
</organism>
<reference key="1">
    <citation type="journal article" date="2005" name="J. Bacteriol.">
        <title>Complete genome sequence and analysis of the multiresistant nosocomial pathogen Corynebacterium jeikeium K411, a lipid-requiring bacterium of the human skin flora.</title>
        <authorList>
            <person name="Tauch A."/>
            <person name="Kaiser O."/>
            <person name="Hain T."/>
            <person name="Goesmann A."/>
            <person name="Weisshaar B."/>
            <person name="Albersmeier A."/>
            <person name="Bekel T."/>
            <person name="Bischoff N."/>
            <person name="Brune I."/>
            <person name="Chakraborty T."/>
            <person name="Kalinowski J."/>
            <person name="Meyer F."/>
            <person name="Rupp O."/>
            <person name="Schneiker S."/>
            <person name="Viehoever P."/>
            <person name="Puehler A."/>
        </authorList>
    </citation>
    <scope>NUCLEOTIDE SEQUENCE [LARGE SCALE GENOMIC DNA]</scope>
    <source>
        <strain>K411</strain>
    </source>
</reference>
<proteinExistence type="inferred from homology"/>
<protein>
    <recommendedName>
        <fullName evidence="1">Large ribosomal subunit protein uL23</fullName>
    </recommendedName>
    <alternativeName>
        <fullName evidence="2">50S ribosomal protein L23</fullName>
    </alternativeName>
</protein>
<feature type="chain" id="PRO_1000068072" description="Large ribosomal subunit protein uL23">
    <location>
        <begin position="1"/>
        <end position="101"/>
    </location>
</feature>
<gene>
    <name evidence="1" type="primary">rplW</name>
    <name type="ordered locus">jk1831</name>
</gene>
<dbReference type="EMBL" id="CR931997">
    <property type="protein sequence ID" value="CAI38008.1"/>
    <property type="molecule type" value="Genomic_DNA"/>
</dbReference>
<dbReference type="RefSeq" id="WP_011274165.1">
    <property type="nucleotide sequence ID" value="NC_007164.1"/>
</dbReference>
<dbReference type="SMR" id="Q4JT49"/>
<dbReference type="STRING" id="306537.jk1831"/>
<dbReference type="KEGG" id="cjk:jk1831"/>
<dbReference type="PATRIC" id="fig|306537.10.peg.1854"/>
<dbReference type="eggNOG" id="COG0089">
    <property type="taxonomic scope" value="Bacteria"/>
</dbReference>
<dbReference type="HOGENOM" id="CLU_037562_3_2_11"/>
<dbReference type="OrthoDB" id="9793353at2"/>
<dbReference type="Proteomes" id="UP000000545">
    <property type="component" value="Chromosome"/>
</dbReference>
<dbReference type="GO" id="GO:1990904">
    <property type="term" value="C:ribonucleoprotein complex"/>
    <property type="evidence" value="ECO:0007669"/>
    <property type="project" value="UniProtKB-KW"/>
</dbReference>
<dbReference type="GO" id="GO:0005840">
    <property type="term" value="C:ribosome"/>
    <property type="evidence" value="ECO:0007669"/>
    <property type="project" value="UniProtKB-KW"/>
</dbReference>
<dbReference type="GO" id="GO:0019843">
    <property type="term" value="F:rRNA binding"/>
    <property type="evidence" value="ECO:0007669"/>
    <property type="project" value="UniProtKB-UniRule"/>
</dbReference>
<dbReference type="GO" id="GO:0003735">
    <property type="term" value="F:structural constituent of ribosome"/>
    <property type="evidence" value="ECO:0007669"/>
    <property type="project" value="InterPro"/>
</dbReference>
<dbReference type="GO" id="GO:0006412">
    <property type="term" value="P:translation"/>
    <property type="evidence" value="ECO:0007669"/>
    <property type="project" value="UniProtKB-UniRule"/>
</dbReference>
<dbReference type="FunFam" id="3.30.70.330:FF:000001">
    <property type="entry name" value="50S ribosomal protein L23"/>
    <property type="match status" value="1"/>
</dbReference>
<dbReference type="Gene3D" id="3.30.70.330">
    <property type="match status" value="1"/>
</dbReference>
<dbReference type="HAMAP" id="MF_01369_B">
    <property type="entry name" value="Ribosomal_uL23_B"/>
    <property type="match status" value="1"/>
</dbReference>
<dbReference type="InterPro" id="IPR012677">
    <property type="entry name" value="Nucleotide-bd_a/b_plait_sf"/>
</dbReference>
<dbReference type="InterPro" id="IPR013025">
    <property type="entry name" value="Ribosomal_uL23-like"/>
</dbReference>
<dbReference type="InterPro" id="IPR012678">
    <property type="entry name" value="Ribosomal_uL23/eL15/eS24_sf"/>
</dbReference>
<dbReference type="NCBIfam" id="NF004363">
    <property type="entry name" value="PRK05738.2-4"/>
    <property type="match status" value="1"/>
</dbReference>
<dbReference type="NCBIfam" id="NF004364">
    <property type="entry name" value="PRK05738.2-5"/>
    <property type="match status" value="1"/>
</dbReference>
<dbReference type="PANTHER" id="PTHR11620">
    <property type="entry name" value="60S RIBOSOMAL PROTEIN L23A"/>
    <property type="match status" value="1"/>
</dbReference>
<dbReference type="Pfam" id="PF00276">
    <property type="entry name" value="Ribosomal_L23"/>
    <property type="match status" value="1"/>
</dbReference>
<dbReference type="SUPFAM" id="SSF54189">
    <property type="entry name" value="Ribosomal proteins S24e, L23 and L15e"/>
    <property type="match status" value="1"/>
</dbReference>
<name>RL23_CORJK</name>
<sequence>MSTVADPRDIIIAPVVSEKSYGLMEQNVYTFLVHPSSNKTQIKIAVEQIFGVKVASVNTVNREGKRKRTRTGYGQRKATKRAMVTLVAGSDPIDIFGGATA</sequence>
<evidence type="ECO:0000255" key="1">
    <source>
        <dbReference type="HAMAP-Rule" id="MF_01369"/>
    </source>
</evidence>
<evidence type="ECO:0000305" key="2"/>
<comment type="function">
    <text evidence="1">One of the early assembly proteins it binds 23S rRNA. One of the proteins that surrounds the polypeptide exit tunnel on the outside of the ribosome. Forms the main docking site for trigger factor binding to the ribosome.</text>
</comment>
<comment type="subunit">
    <text evidence="1">Part of the 50S ribosomal subunit. Contacts protein L29, and trigger factor when it is bound to the ribosome.</text>
</comment>
<comment type="similarity">
    <text evidence="1">Belongs to the universal ribosomal protein uL23 family.</text>
</comment>
<accession>Q4JT49</accession>
<keyword id="KW-1185">Reference proteome</keyword>
<keyword id="KW-0687">Ribonucleoprotein</keyword>
<keyword id="KW-0689">Ribosomal protein</keyword>
<keyword id="KW-0694">RNA-binding</keyword>
<keyword id="KW-0699">rRNA-binding</keyword>